<organism>
    <name type="scientific">Nocardiopsis dassonvillei (strain ATCC 23218 / DSM 43111 / CIP 107115 / JCM 7437 / KCTC 9190 / NBRC 14626 / NCTC 10488 / NRRL B-5397 / IMRU 509)</name>
    <name type="common">Actinomadura dassonvillei</name>
    <dbReference type="NCBI Taxonomy" id="446468"/>
    <lineage>
        <taxon>Bacteria</taxon>
        <taxon>Bacillati</taxon>
        <taxon>Actinomycetota</taxon>
        <taxon>Actinomycetes</taxon>
        <taxon>Streptosporangiales</taxon>
        <taxon>Nocardiopsidaceae</taxon>
        <taxon>Nocardiopsis</taxon>
    </lineage>
</organism>
<reference key="1">
    <citation type="journal article" date="2010" name="Stand. Genomic Sci.">
        <title>Complete genome sequence of Nocardiopsis dassonvillei type strain (IMRU 509).</title>
        <authorList>
            <consortium name="US DOE Joint Genome Institute (JGI-PGF)"/>
            <person name="Sun H."/>
            <person name="Lapidus A."/>
            <person name="Nolan M."/>
            <person name="Lucas S."/>
            <person name="Del Rio T.G."/>
            <person name="Tice H."/>
            <person name="Cheng J.F."/>
            <person name="Tapia R."/>
            <person name="Han C."/>
            <person name="Goodwin L."/>
            <person name="Pitluck S."/>
            <person name="Pagani I."/>
            <person name="Ivanova N."/>
            <person name="Mavromatis K."/>
            <person name="Mikhailova N."/>
            <person name="Pati A."/>
            <person name="Chen A."/>
            <person name="Palaniappan K."/>
            <person name="Land M."/>
            <person name="Hauser L."/>
            <person name="Chang Y.J."/>
            <person name="Jeffries C.D."/>
            <person name="Djao O.D."/>
            <person name="Rohde M."/>
            <person name="Sikorski J."/>
            <person name="Goker M."/>
            <person name="Woyke T."/>
            <person name="Bristow J."/>
            <person name="Eisen J.A."/>
            <person name="Markowitz V."/>
            <person name="Hugenholtz P."/>
            <person name="Kyrpides N.C."/>
            <person name="Klenk H.P."/>
        </authorList>
    </citation>
    <scope>NUCLEOTIDE SEQUENCE [LARGE SCALE GENOMIC DNA]</scope>
    <source>
        <strain>ATCC 23218 / DSM 43111 / CIP 107115 / JCM 7437 / KCTC 9190 / NBRC 14626 / NCTC 10488 / NRRL B-5397 / IMRU 509</strain>
    </source>
</reference>
<proteinExistence type="inferred from homology"/>
<dbReference type="EC" id="6.3.1.13" evidence="1"/>
<dbReference type="EMBL" id="CP002040">
    <property type="protein sequence ID" value="ADH66973.1"/>
    <property type="molecule type" value="Genomic_DNA"/>
</dbReference>
<dbReference type="RefSeq" id="WP_013152580.1">
    <property type="nucleotide sequence ID" value="NC_014210.1"/>
</dbReference>
<dbReference type="SMR" id="D7B412"/>
<dbReference type="STRING" id="446468.Ndas_1544"/>
<dbReference type="GeneID" id="91484149"/>
<dbReference type="KEGG" id="nda:Ndas_1544"/>
<dbReference type="eggNOG" id="COG0215">
    <property type="taxonomic scope" value="Bacteria"/>
</dbReference>
<dbReference type="HOGENOM" id="CLU_013528_0_0_11"/>
<dbReference type="OrthoDB" id="9815130at2"/>
<dbReference type="Proteomes" id="UP000002219">
    <property type="component" value="Chromosome 1"/>
</dbReference>
<dbReference type="GO" id="GO:0005829">
    <property type="term" value="C:cytosol"/>
    <property type="evidence" value="ECO:0007669"/>
    <property type="project" value="TreeGrafter"/>
</dbReference>
<dbReference type="GO" id="GO:0005524">
    <property type="term" value="F:ATP binding"/>
    <property type="evidence" value="ECO:0007669"/>
    <property type="project" value="UniProtKB-KW"/>
</dbReference>
<dbReference type="GO" id="GO:0035446">
    <property type="term" value="F:cysteine-glucosaminylinositol ligase activity"/>
    <property type="evidence" value="ECO:0007669"/>
    <property type="project" value="UniProtKB-UniRule"/>
</dbReference>
<dbReference type="GO" id="GO:0004817">
    <property type="term" value="F:cysteine-tRNA ligase activity"/>
    <property type="evidence" value="ECO:0007669"/>
    <property type="project" value="TreeGrafter"/>
</dbReference>
<dbReference type="GO" id="GO:0008270">
    <property type="term" value="F:zinc ion binding"/>
    <property type="evidence" value="ECO:0007669"/>
    <property type="project" value="UniProtKB-UniRule"/>
</dbReference>
<dbReference type="GO" id="GO:0006423">
    <property type="term" value="P:cysteinyl-tRNA aminoacylation"/>
    <property type="evidence" value="ECO:0007669"/>
    <property type="project" value="TreeGrafter"/>
</dbReference>
<dbReference type="GO" id="GO:0010125">
    <property type="term" value="P:mycothiol biosynthetic process"/>
    <property type="evidence" value="ECO:0007669"/>
    <property type="project" value="UniProtKB-UniRule"/>
</dbReference>
<dbReference type="CDD" id="cd00672">
    <property type="entry name" value="CysRS_core"/>
    <property type="match status" value="1"/>
</dbReference>
<dbReference type="FunFam" id="3.40.50.620:FF:000134">
    <property type="entry name" value="L-cysteine:1D-myo-inositol 2-amino-2-deoxy-alpha-D-glucopyranoside ligase"/>
    <property type="match status" value="1"/>
</dbReference>
<dbReference type="Gene3D" id="1.20.120.640">
    <property type="entry name" value="Anticodon-binding domain of a subclass of class I aminoacyl-tRNA synthetases"/>
    <property type="match status" value="1"/>
</dbReference>
<dbReference type="Gene3D" id="3.40.50.620">
    <property type="entry name" value="HUPs"/>
    <property type="match status" value="1"/>
</dbReference>
<dbReference type="HAMAP" id="MF_01697">
    <property type="entry name" value="MshC"/>
    <property type="match status" value="1"/>
</dbReference>
<dbReference type="InterPro" id="IPR024909">
    <property type="entry name" value="Cys-tRNA/MSH_ligase"/>
</dbReference>
<dbReference type="InterPro" id="IPR017812">
    <property type="entry name" value="Mycothiol_ligase_MshC"/>
</dbReference>
<dbReference type="InterPro" id="IPR014729">
    <property type="entry name" value="Rossmann-like_a/b/a_fold"/>
</dbReference>
<dbReference type="InterPro" id="IPR032678">
    <property type="entry name" value="tRNA-synt_1_cat_dom"/>
</dbReference>
<dbReference type="NCBIfam" id="TIGR03447">
    <property type="entry name" value="mycothiol_MshC"/>
    <property type="match status" value="1"/>
</dbReference>
<dbReference type="PANTHER" id="PTHR10890:SF3">
    <property type="entry name" value="CYSTEINE--TRNA LIGASE, CYTOPLASMIC"/>
    <property type="match status" value="1"/>
</dbReference>
<dbReference type="PANTHER" id="PTHR10890">
    <property type="entry name" value="CYSTEINYL-TRNA SYNTHETASE"/>
    <property type="match status" value="1"/>
</dbReference>
<dbReference type="Pfam" id="PF01406">
    <property type="entry name" value="tRNA-synt_1e"/>
    <property type="match status" value="1"/>
</dbReference>
<dbReference type="PRINTS" id="PR00983">
    <property type="entry name" value="TRNASYNTHCYS"/>
</dbReference>
<dbReference type="SUPFAM" id="SSF52374">
    <property type="entry name" value="Nucleotidylyl transferase"/>
    <property type="match status" value="1"/>
</dbReference>
<comment type="function">
    <text evidence="1">Catalyzes the ATP-dependent condensation of GlcN-Ins and L-cysteine to form L-Cys-GlcN-Ins.</text>
</comment>
<comment type="catalytic activity">
    <reaction evidence="1">
        <text>1D-myo-inositol 2-amino-2-deoxy-alpha-D-glucopyranoside + L-cysteine + ATP = 1D-myo-inositol 2-(L-cysteinylamino)-2-deoxy-alpha-D-glucopyranoside + AMP + diphosphate + H(+)</text>
        <dbReference type="Rhea" id="RHEA:26176"/>
        <dbReference type="ChEBI" id="CHEBI:15378"/>
        <dbReference type="ChEBI" id="CHEBI:30616"/>
        <dbReference type="ChEBI" id="CHEBI:33019"/>
        <dbReference type="ChEBI" id="CHEBI:35235"/>
        <dbReference type="ChEBI" id="CHEBI:58886"/>
        <dbReference type="ChEBI" id="CHEBI:58887"/>
        <dbReference type="ChEBI" id="CHEBI:456215"/>
        <dbReference type="EC" id="6.3.1.13"/>
    </reaction>
</comment>
<comment type="cofactor">
    <cofactor evidence="1">
        <name>Zn(2+)</name>
        <dbReference type="ChEBI" id="CHEBI:29105"/>
    </cofactor>
    <text evidence="1">Binds 1 zinc ion per subunit.</text>
</comment>
<comment type="subunit">
    <text evidence="1">Monomer.</text>
</comment>
<comment type="similarity">
    <text evidence="1">Belongs to the class-I aminoacyl-tRNA synthetase family. MshC subfamily.</text>
</comment>
<feature type="chain" id="PRO_0000400473" description="L-cysteine:1D-myo-inositol 2-amino-2-deoxy-alpha-D-glucopyranoside ligase">
    <location>
        <begin position="1"/>
        <end position="407"/>
    </location>
</feature>
<feature type="region of interest" description="Disordered" evidence="2">
    <location>
        <begin position="1"/>
        <end position="22"/>
    </location>
</feature>
<feature type="short sequence motif" description="'HIGH' region" evidence="1">
    <location>
        <begin position="45"/>
        <end position="55"/>
    </location>
</feature>
<feature type="short sequence motif" description="'ERGGDP' region" evidence="1">
    <location>
        <begin position="183"/>
        <end position="188"/>
    </location>
</feature>
<feature type="short sequence motif" description="'KMSKS' region" evidence="1">
    <location>
        <begin position="284"/>
        <end position="288"/>
    </location>
</feature>
<feature type="binding site" evidence="1">
    <location>
        <begin position="43"/>
        <end position="46"/>
    </location>
    <ligand>
        <name>L-cysteinyl-5'-AMP</name>
        <dbReference type="ChEBI" id="CHEBI:144924"/>
    </ligand>
</feature>
<feature type="binding site" evidence="1">
    <location>
        <position position="43"/>
    </location>
    <ligand>
        <name>Zn(2+)</name>
        <dbReference type="ChEBI" id="CHEBI:29105"/>
    </ligand>
</feature>
<feature type="binding site" evidence="1">
    <location>
        <position position="58"/>
    </location>
    <ligand>
        <name>L-cysteinyl-5'-AMP</name>
        <dbReference type="ChEBI" id="CHEBI:144924"/>
    </ligand>
</feature>
<feature type="binding site" evidence="1">
    <location>
        <begin position="81"/>
        <end position="83"/>
    </location>
    <ligand>
        <name>L-cysteinyl-5'-AMP</name>
        <dbReference type="ChEBI" id="CHEBI:144924"/>
    </ligand>
</feature>
<feature type="binding site" evidence="1">
    <location>
        <position position="223"/>
    </location>
    <ligand>
        <name>L-cysteinyl-5'-AMP</name>
        <dbReference type="ChEBI" id="CHEBI:144924"/>
    </ligand>
</feature>
<feature type="binding site" evidence="1">
    <location>
        <position position="227"/>
    </location>
    <ligand>
        <name>Zn(2+)</name>
        <dbReference type="ChEBI" id="CHEBI:29105"/>
    </ligand>
</feature>
<feature type="binding site" evidence="1">
    <location>
        <begin position="245"/>
        <end position="247"/>
    </location>
    <ligand>
        <name>L-cysteinyl-5'-AMP</name>
        <dbReference type="ChEBI" id="CHEBI:144924"/>
    </ligand>
</feature>
<feature type="binding site" evidence="1">
    <location>
        <position position="252"/>
    </location>
    <ligand>
        <name>Zn(2+)</name>
        <dbReference type="ChEBI" id="CHEBI:29105"/>
    </ligand>
</feature>
<feature type="binding site" evidence="1">
    <location>
        <position position="278"/>
    </location>
    <ligand>
        <name>L-cysteinyl-5'-AMP</name>
        <dbReference type="ChEBI" id="CHEBI:144924"/>
    </ligand>
</feature>
<evidence type="ECO:0000255" key="1">
    <source>
        <dbReference type="HAMAP-Rule" id="MF_01697"/>
    </source>
</evidence>
<evidence type="ECO:0000256" key="2">
    <source>
        <dbReference type="SAM" id="MobiDB-lite"/>
    </source>
</evidence>
<name>MSHC_NOCDD</name>
<sequence length="407" mass="43789">MRSWSAPDIVPLPGTGGPLRVHDTATGRIRTTTPGPRAGMYACGITPYDAAHLGHAFTYLTFDLVNRVWRDAGHDVNYVQNTTDIDDPLLERAEATGVDWRDLAHREIDVFREDMAALRIIPPTSYVGVVESVDLISDLAARIRDTGAAYELDGDLYFSVAEAPEFGEISNLDRGQMLELFGERGGDPQRTGKKDPLDWLLWRAERPGEPAWDSPLGRGRPGWHIECSAIALDRLGPAFDLNGGGSDLIFPHHEMGAAETRCATGGPNAHNHLHVGMVGLDGEKMSKSLGNLVFVSKLRQQGVDPAVIRLAMLAHHYRAPWEWTDAELPAATARAERWRSALALGAAPDAAPVLAAVRAALSEDLDSPAALAAVDAWADTALTEGGADTGAPALVRATVDTLLGVRL</sequence>
<protein>
    <recommendedName>
        <fullName evidence="1">L-cysteine:1D-myo-inositol 2-amino-2-deoxy-alpha-D-glucopyranoside ligase</fullName>
        <shortName evidence="1">L-Cys:GlcN-Ins ligase</shortName>
        <ecNumber evidence="1">6.3.1.13</ecNumber>
    </recommendedName>
    <alternativeName>
        <fullName evidence="1">Mycothiol ligase</fullName>
        <shortName evidence="1">MSH ligase</shortName>
    </alternativeName>
</protein>
<accession>D7B412</accession>
<gene>
    <name evidence="1" type="primary">mshC</name>
    <name type="ordered locus">Ndas_1544</name>
</gene>
<keyword id="KW-0067">ATP-binding</keyword>
<keyword id="KW-0436">Ligase</keyword>
<keyword id="KW-0479">Metal-binding</keyword>
<keyword id="KW-0547">Nucleotide-binding</keyword>
<keyword id="KW-1185">Reference proteome</keyword>
<keyword id="KW-0862">Zinc</keyword>